<protein>
    <recommendedName>
        <fullName>Ribonuclease M</fullName>
        <shortName>RNase M</shortName>
        <ecNumber>4.6.1.19</ecNumber>
    </recommendedName>
</protein>
<organism>
    <name type="scientific">Aspergillus phoenicis</name>
    <name type="common">Aspergillus saitoi</name>
    <dbReference type="NCBI Taxonomy" id="5063"/>
    <lineage>
        <taxon>Eukaryota</taxon>
        <taxon>Fungi</taxon>
        <taxon>Dikarya</taxon>
        <taxon>Ascomycota</taxon>
        <taxon>Pezizomycotina</taxon>
        <taxon>Eurotiomycetes</taxon>
        <taxon>Eurotiomycetidae</taxon>
        <taxon>Eurotiales</taxon>
        <taxon>Aspergillaceae</taxon>
        <taxon>Aspergillus</taxon>
    </lineage>
</organism>
<proteinExistence type="evidence at protein level"/>
<dbReference type="EC" id="4.6.1.19"/>
<dbReference type="SMR" id="P19791"/>
<dbReference type="GO" id="GO:0005576">
    <property type="term" value="C:extracellular region"/>
    <property type="evidence" value="ECO:0007669"/>
    <property type="project" value="TreeGrafter"/>
</dbReference>
<dbReference type="GO" id="GO:0033897">
    <property type="term" value="F:ribonuclease T2 activity"/>
    <property type="evidence" value="ECO:0007669"/>
    <property type="project" value="UniProtKB-EC"/>
</dbReference>
<dbReference type="GO" id="GO:0003723">
    <property type="term" value="F:RNA binding"/>
    <property type="evidence" value="ECO:0007669"/>
    <property type="project" value="InterPro"/>
</dbReference>
<dbReference type="GO" id="GO:0006401">
    <property type="term" value="P:RNA catabolic process"/>
    <property type="evidence" value="ECO:0007669"/>
    <property type="project" value="TreeGrafter"/>
</dbReference>
<dbReference type="CDD" id="cd01061">
    <property type="entry name" value="RNase_T2_euk"/>
    <property type="match status" value="1"/>
</dbReference>
<dbReference type="FunFam" id="3.90.730.10:FF:000004">
    <property type="entry name" value="Ribonuclease T2-like"/>
    <property type="match status" value="1"/>
</dbReference>
<dbReference type="Gene3D" id="3.90.730.10">
    <property type="entry name" value="Ribonuclease T2-like"/>
    <property type="match status" value="1"/>
</dbReference>
<dbReference type="InterPro" id="IPR033697">
    <property type="entry name" value="Ribonuclease_T2_eukaryotic"/>
</dbReference>
<dbReference type="InterPro" id="IPR001568">
    <property type="entry name" value="RNase_T2-like"/>
</dbReference>
<dbReference type="InterPro" id="IPR036430">
    <property type="entry name" value="RNase_T2-like_sf"/>
</dbReference>
<dbReference type="InterPro" id="IPR018188">
    <property type="entry name" value="RNase_T2_His_AS_1"/>
</dbReference>
<dbReference type="InterPro" id="IPR033130">
    <property type="entry name" value="RNase_T2_His_AS_2"/>
</dbReference>
<dbReference type="PANTHER" id="PTHR11240">
    <property type="entry name" value="RIBONUCLEASE T2"/>
    <property type="match status" value="1"/>
</dbReference>
<dbReference type="PANTHER" id="PTHR11240:SF79">
    <property type="entry name" value="RIBONUCLEASE T2"/>
    <property type="match status" value="1"/>
</dbReference>
<dbReference type="Pfam" id="PF00445">
    <property type="entry name" value="Ribonuclease_T2"/>
    <property type="match status" value="1"/>
</dbReference>
<dbReference type="SUPFAM" id="SSF55895">
    <property type="entry name" value="Ribonuclease Rh-like"/>
    <property type="match status" value="1"/>
</dbReference>
<dbReference type="PROSITE" id="PS00530">
    <property type="entry name" value="RNASE_T2_1"/>
    <property type="match status" value="1"/>
</dbReference>
<dbReference type="PROSITE" id="PS00531">
    <property type="entry name" value="RNASE_T2_2"/>
    <property type="match status" value="1"/>
</dbReference>
<keyword id="KW-0903">Direct protein sequencing</keyword>
<keyword id="KW-1015">Disulfide bond</keyword>
<keyword id="KW-0255">Endonuclease</keyword>
<keyword id="KW-0325">Glycoprotein</keyword>
<keyword id="KW-0378">Hydrolase</keyword>
<keyword id="KW-0456">Lyase</keyword>
<keyword id="KW-0540">Nuclease</keyword>
<comment type="function">
    <text>This is a base non-specific and adenylic acid preferential ribonuclease.</text>
</comment>
<comment type="catalytic activity">
    <reaction evidence="2 3">
        <text>a ribonucleotidyl-ribonucleotide-RNA + H2O = a 3'-end 3'-phospho-ribonucleotide-RNA + a 5'-end dephospho-ribonucleoside-RNA + H(+)</text>
        <dbReference type="Rhea" id="RHEA:68052"/>
        <dbReference type="Rhea" id="RHEA-COMP:10463"/>
        <dbReference type="Rhea" id="RHEA-COMP:13936"/>
        <dbReference type="Rhea" id="RHEA-COMP:17355"/>
        <dbReference type="ChEBI" id="CHEBI:15377"/>
        <dbReference type="ChEBI" id="CHEBI:15378"/>
        <dbReference type="ChEBI" id="CHEBI:83062"/>
        <dbReference type="ChEBI" id="CHEBI:138284"/>
        <dbReference type="ChEBI" id="CHEBI:173118"/>
        <dbReference type="EC" id="4.6.1.19"/>
    </reaction>
</comment>
<comment type="similarity">
    <text evidence="4">Belongs to the RNase T2 family.</text>
</comment>
<name>RNM_ASPPH</name>
<reference key="1">
    <citation type="journal article" date="1990" name="J. Biochem.">
        <title>Primary structure of a base non-specific and adenylic acid preferential ribonuclease from Aspergillus saitoi.</title>
        <authorList>
            <person name="Watanabe H."/>
            <person name="Naitoh A."/>
            <person name="Suyama Y."/>
            <person name="Inokuchi N."/>
            <person name="Shimada H."/>
            <person name="Koyama T."/>
            <person name="Ohgi K."/>
            <person name="Irie M."/>
        </authorList>
    </citation>
    <scope>PROTEIN SEQUENCE</scope>
</reference>
<evidence type="ECO:0000250" key="1"/>
<evidence type="ECO:0000255" key="2">
    <source>
        <dbReference type="PROSITE-ProRule" id="PRU10045"/>
    </source>
</evidence>
<evidence type="ECO:0000255" key="3">
    <source>
        <dbReference type="PROSITE-ProRule" id="PRU10046"/>
    </source>
</evidence>
<evidence type="ECO:0000305" key="4"/>
<sequence>TIDTCSSDSPLSCQTDNEASCCFNSPGGSLLQTQFWDYDPSDGPSDSWTIHGLWPDNCDGSYQEYCDDSREYSNITSILEAQDRTELLSYMKEYWPDYEGADEDESFWEHEWNKHGTCINTIDPSCYTDYYAQEEVGDFFQQVVDLFKTLDSYTALSDAGITPSEDATYKLSDIEDALAAIHDGYPPYVGCEDGALSQLYYYFNVKGSAIGGTYVASERLEDSNCKGSGIKYPPKSSS</sequence>
<feature type="chain" id="PRO_0000206504" description="Ribonuclease M">
    <location>
        <begin position="1"/>
        <end position="238"/>
    </location>
</feature>
<feature type="active site" evidence="1">
    <location>
        <position position="51"/>
    </location>
</feature>
<feature type="active site" evidence="1">
    <location>
        <position position="111"/>
    </location>
</feature>
<feature type="active site" evidence="1">
    <location>
        <position position="115"/>
    </location>
</feature>
<feature type="glycosylation site" description="N-linked (GlcNAc...) asparagine">
    <location>
        <position position="74"/>
    </location>
</feature>
<feature type="disulfide bond" evidence="1">
    <location>
        <begin position="5"/>
        <end position="22"/>
    </location>
</feature>
<feature type="disulfide bond" evidence="1">
    <location>
        <begin position="13"/>
        <end position="58"/>
    </location>
</feature>
<feature type="disulfide bond" evidence="1">
    <location>
        <begin position="21"/>
        <end position="126"/>
    </location>
</feature>
<feature type="disulfide bond" evidence="1">
    <location>
        <begin position="66"/>
        <end position="118"/>
    </location>
</feature>
<feature type="disulfide bond" evidence="1">
    <location>
        <begin position="191"/>
        <end position="225"/>
    </location>
</feature>
<accession>P19791</accession>